<name>PSRP_VIBC3</name>
<dbReference type="EC" id="2.7.11.33" evidence="1"/>
<dbReference type="EC" id="2.7.4.28" evidence="1"/>
<dbReference type="EMBL" id="CP000626">
    <property type="protein sequence ID" value="ABQ18905.1"/>
    <property type="molecule type" value="Genomic_DNA"/>
</dbReference>
<dbReference type="EMBL" id="CP001236">
    <property type="protein sequence ID" value="ACP11840.1"/>
    <property type="molecule type" value="Genomic_DNA"/>
</dbReference>
<dbReference type="RefSeq" id="WP_001177874.1">
    <property type="nucleotide sequence ID" value="NZ_JAACZH010000003.1"/>
</dbReference>
<dbReference type="SMR" id="A5F0Z4"/>
<dbReference type="KEGG" id="vco:VC0395_0252"/>
<dbReference type="KEGG" id="vcr:VC395_A1010"/>
<dbReference type="PATRIC" id="fig|345073.21.peg.3735"/>
<dbReference type="eggNOG" id="COG1806">
    <property type="taxonomic scope" value="Bacteria"/>
</dbReference>
<dbReference type="HOGENOM" id="CLU_046206_1_0_6"/>
<dbReference type="OrthoDB" id="9782201at2"/>
<dbReference type="Proteomes" id="UP000000249">
    <property type="component" value="Chromosome 1"/>
</dbReference>
<dbReference type="GO" id="GO:0043531">
    <property type="term" value="F:ADP binding"/>
    <property type="evidence" value="ECO:0007669"/>
    <property type="project" value="UniProtKB-UniRule"/>
</dbReference>
<dbReference type="GO" id="GO:0005524">
    <property type="term" value="F:ATP binding"/>
    <property type="evidence" value="ECO:0007669"/>
    <property type="project" value="InterPro"/>
</dbReference>
<dbReference type="GO" id="GO:0016776">
    <property type="term" value="F:phosphotransferase activity, phosphate group as acceptor"/>
    <property type="evidence" value="ECO:0007669"/>
    <property type="project" value="UniProtKB-UniRule"/>
</dbReference>
<dbReference type="GO" id="GO:0004674">
    <property type="term" value="F:protein serine/threonine kinase activity"/>
    <property type="evidence" value="ECO:0007669"/>
    <property type="project" value="UniProtKB-UniRule"/>
</dbReference>
<dbReference type="HAMAP" id="MF_01062">
    <property type="entry name" value="PSRP"/>
    <property type="match status" value="1"/>
</dbReference>
<dbReference type="InterPro" id="IPR005177">
    <property type="entry name" value="Kinase-pyrophosphorylase"/>
</dbReference>
<dbReference type="InterPro" id="IPR026530">
    <property type="entry name" value="PSRP"/>
</dbReference>
<dbReference type="NCBIfam" id="NF003742">
    <property type="entry name" value="PRK05339.1"/>
    <property type="match status" value="1"/>
</dbReference>
<dbReference type="PANTHER" id="PTHR31756">
    <property type="entry name" value="PYRUVATE, PHOSPHATE DIKINASE REGULATORY PROTEIN 1, CHLOROPLASTIC"/>
    <property type="match status" value="1"/>
</dbReference>
<dbReference type="PANTHER" id="PTHR31756:SF3">
    <property type="entry name" value="PYRUVATE, PHOSPHATE DIKINASE REGULATORY PROTEIN 1, CHLOROPLASTIC"/>
    <property type="match status" value="1"/>
</dbReference>
<dbReference type="Pfam" id="PF03618">
    <property type="entry name" value="Kinase-PPPase"/>
    <property type="match status" value="1"/>
</dbReference>
<keyword id="KW-0418">Kinase</keyword>
<keyword id="KW-0547">Nucleotide-binding</keyword>
<keyword id="KW-0723">Serine/threonine-protein kinase</keyword>
<keyword id="KW-0808">Transferase</keyword>
<proteinExistence type="inferred from homology"/>
<protein>
    <recommendedName>
        <fullName evidence="1">Putative phosphoenolpyruvate synthase regulatory protein</fullName>
        <shortName evidence="1">PEP synthase regulatory protein</shortName>
        <shortName evidence="1">PSRP</shortName>
        <ecNumber evidence="1">2.7.11.33</ecNumber>
        <ecNumber evidence="1">2.7.4.28</ecNumber>
    </recommendedName>
    <alternativeName>
        <fullName evidence="1">Pyruvate, water dikinase regulatory protein</fullName>
    </alternativeName>
</protein>
<sequence length="277" mass="31801">MQMESQRRDVFYVSDGTAITCETLGHVVLGQFAVQPNEKTFPFVESDEKLSELLKQIQRSYQLHGVKPLVFFSMVIPEMRTRLLQAPAHFYDVLESIVQRVSLDIEMEPAPKLQRSRSVGKDSDTYFDRIAAIEYTLAHDDGVSLKDLDRADIILLGVSRSGKTPTSLYMAMQFGLRVVNYPFIAEDMHAMRLLPEFEFHRHKLFGLTINAERLTEIRENRLAGSEYASNQQCQQELATVEALFRREAISYINTSSLSVEEISTRILERTGLKRRLF</sequence>
<organism>
    <name type="scientific">Vibrio cholerae serotype O1 (strain ATCC 39541 / Classical Ogawa 395 / O395)</name>
    <dbReference type="NCBI Taxonomy" id="345073"/>
    <lineage>
        <taxon>Bacteria</taxon>
        <taxon>Pseudomonadati</taxon>
        <taxon>Pseudomonadota</taxon>
        <taxon>Gammaproteobacteria</taxon>
        <taxon>Vibrionales</taxon>
        <taxon>Vibrionaceae</taxon>
        <taxon>Vibrio</taxon>
    </lineage>
</organism>
<comment type="function">
    <text evidence="1">Bifunctional serine/threonine kinase and phosphorylase involved in the regulation of the phosphoenolpyruvate synthase (PEPS) by catalyzing its phosphorylation/dephosphorylation.</text>
</comment>
<comment type="catalytic activity">
    <reaction evidence="1">
        <text>[pyruvate, water dikinase] + ADP = [pyruvate, water dikinase]-phosphate + AMP + H(+)</text>
        <dbReference type="Rhea" id="RHEA:46020"/>
        <dbReference type="Rhea" id="RHEA-COMP:11425"/>
        <dbReference type="Rhea" id="RHEA-COMP:11426"/>
        <dbReference type="ChEBI" id="CHEBI:15378"/>
        <dbReference type="ChEBI" id="CHEBI:43176"/>
        <dbReference type="ChEBI" id="CHEBI:68546"/>
        <dbReference type="ChEBI" id="CHEBI:456215"/>
        <dbReference type="ChEBI" id="CHEBI:456216"/>
        <dbReference type="EC" id="2.7.11.33"/>
    </reaction>
</comment>
<comment type="catalytic activity">
    <reaction evidence="1">
        <text>[pyruvate, water dikinase]-phosphate + phosphate + H(+) = [pyruvate, water dikinase] + diphosphate</text>
        <dbReference type="Rhea" id="RHEA:48580"/>
        <dbReference type="Rhea" id="RHEA-COMP:11425"/>
        <dbReference type="Rhea" id="RHEA-COMP:11426"/>
        <dbReference type="ChEBI" id="CHEBI:15378"/>
        <dbReference type="ChEBI" id="CHEBI:33019"/>
        <dbReference type="ChEBI" id="CHEBI:43176"/>
        <dbReference type="ChEBI" id="CHEBI:43474"/>
        <dbReference type="ChEBI" id="CHEBI:68546"/>
        <dbReference type="EC" id="2.7.4.28"/>
    </reaction>
</comment>
<comment type="similarity">
    <text evidence="1">Belongs to the pyruvate, phosphate/water dikinase regulatory protein family. PSRP subfamily.</text>
</comment>
<evidence type="ECO:0000255" key="1">
    <source>
        <dbReference type="HAMAP-Rule" id="MF_01062"/>
    </source>
</evidence>
<feature type="chain" id="PRO_1000073012" description="Putative phosphoenolpyruvate synthase regulatory protein">
    <location>
        <begin position="1"/>
        <end position="277"/>
    </location>
</feature>
<feature type="binding site" evidence="1">
    <location>
        <begin position="157"/>
        <end position="164"/>
    </location>
    <ligand>
        <name>ADP</name>
        <dbReference type="ChEBI" id="CHEBI:456216"/>
    </ligand>
</feature>
<reference key="1">
    <citation type="submission" date="2007-03" db="EMBL/GenBank/DDBJ databases">
        <authorList>
            <person name="Heidelberg J."/>
        </authorList>
    </citation>
    <scope>NUCLEOTIDE SEQUENCE [LARGE SCALE GENOMIC DNA]</scope>
    <source>
        <strain>ATCC 39541 / Classical Ogawa 395 / O395</strain>
    </source>
</reference>
<reference key="2">
    <citation type="journal article" date="2008" name="PLoS ONE">
        <title>A recalibrated molecular clock and independent origins for the cholera pandemic clones.</title>
        <authorList>
            <person name="Feng L."/>
            <person name="Reeves P.R."/>
            <person name="Lan R."/>
            <person name="Ren Y."/>
            <person name="Gao C."/>
            <person name="Zhou Z."/>
            <person name="Ren Y."/>
            <person name="Cheng J."/>
            <person name="Wang W."/>
            <person name="Wang J."/>
            <person name="Qian W."/>
            <person name="Li D."/>
            <person name="Wang L."/>
        </authorList>
    </citation>
    <scope>NUCLEOTIDE SEQUENCE [LARGE SCALE GENOMIC DNA]</scope>
    <source>
        <strain>ATCC 39541 / Classical Ogawa 395 / O395</strain>
    </source>
</reference>
<gene>
    <name type="ordered locus">VC0395_0252</name>
    <name type="ordered locus">VC395_A1010</name>
</gene>
<accession>A5F0Z4</accession>
<accession>C3M6S7</accession>